<feature type="chain" id="PRO_0000279685" description="WD repeat-containing protein 82">
    <location>
        <begin position="1"/>
        <end position="313"/>
    </location>
</feature>
<feature type="repeat" description="WD 1">
    <location>
        <begin position="19"/>
        <end position="58"/>
    </location>
</feature>
<feature type="repeat" description="WD 2">
    <location>
        <begin position="105"/>
        <end position="144"/>
    </location>
</feature>
<feature type="repeat" description="WD 3">
    <location>
        <begin position="146"/>
        <end position="184"/>
    </location>
</feature>
<feature type="repeat" description="WD 4">
    <location>
        <begin position="192"/>
        <end position="231"/>
    </location>
</feature>
<feature type="repeat" description="WD 5">
    <location>
        <begin position="236"/>
        <end position="276"/>
    </location>
</feature>
<feature type="repeat" description="WD 6">
    <location>
        <begin position="280"/>
        <end position="313"/>
    </location>
</feature>
<reference key="1">
    <citation type="journal article" date="2003" name="Genome Res.">
        <title>The secreted protein discovery initiative (SPDI), a large-scale effort to identify novel human secreted and transmembrane proteins: a bioinformatics assessment.</title>
        <authorList>
            <person name="Clark H.F."/>
            <person name="Gurney A.L."/>
            <person name="Abaya E."/>
            <person name="Baker K."/>
            <person name="Baldwin D.T."/>
            <person name="Brush J."/>
            <person name="Chen J."/>
            <person name="Chow B."/>
            <person name="Chui C."/>
            <person name="Crowley C."/>
            <person name="Currell B."/>
            <person name="Deuel B."/>
            <person name="Dowd P."/>
            <person name="Eaton D."/>
            <person name="Foster J.S."/>
            <person name="Grimaldi C."/>
            <person name="Gu Q."/>
            <person name="Hass P.E."/>
            <person name="Heldens S."/>
            <person name="Huang A."/>
            <person name="Kim H.S."/>
            <person name="Klimowski L."/>
            <person name="Jin Y."/>
            <person name="Johnson S."/>
            <person name="Lee J."/>
            <person name="Lewis L."/>
            <person name="Liao D."/>
            <person name="Mark M.R."/>
            <person name="Robbie E."/>
            <person name="Sanchez C."/>
            <person name="Schoenfeld J."/>
            <person name="Seshagiri S."/>
            <person name="Simmons L."/>
            <person name="Singh J."/>
            <person name="Smith V."/>
            <person name="Stinson J."/>
            <person name="Vagts A."/>
            <person name="Vandlen R.L."/>
            <person name="Watanabe C."/>
            <person name="Wieand D."/>
            <person name="Woods K."/>
            <person name="Xie M.-H."/>
            <person name="Yansura D.G."/>
            <person name="Yi S."/>
            <person name="Yu G."/>
            <person name="Yuan J."/>
            <person name="Zhang M."/>
            <person name="Zhang Z."/>
            <person name="Goddard A.D."/>
            <person name="Wood W.I."/>
            <person name="Godowski P.J."/>
            <person name="Gray A.M."/>
        </authorList>
    </citation>
    <scope>NUCLEOTIDE SEQUENCE [LARGE SCALE MRNA]</scope>
</reference>
<reference key="2">
    <citation type="journal article" date="2004" name="Nat. Genet.">
        <title>Complete sequencing and characterization of 21,243 full-length human cDNAs.</title>
        <authorList>
            <person name="Ota T."/>
            <person name="Suzuki Y."/>
            <person name="Nishikawa T."/>
            <person name="Otsuki T."/>
            <person name="Sugiyama T."/>
            <person name="Irie R."/>
            <person name="Wakamatsu A."/>
            <person name="Hayashi K."/>
            <person name="Sato H."/>
            <person name="Nagai K."/>
            <person name="Kimura K."/>
            <person name="Makita H."/>
            <person name="Sekine M."/>
            <person name="Obayashi M."/>
            <person name="Nishi T."/>
            <person name="Shibahara T."/>
            <person name="Tanaka T."/>
            <person name="Ishii S."/>
            <person name="Yamamoto J."/>
            <person name="Saito K."/>
            <person name="Kawai Y."/>
            <person name="Isono Y."/>
            <person name="Nakamura Y."/>
            <person name="Nagahari K."/>
            <person name="Murakami K."/>
            <person name="Yasuda T."/>
            <person name="Iwayanagi T."/>
            <person name="Wagatsuma M."/>
            <person name="Shiratori A."/>
            <person name="Sudo H."/>
            <person name="Hosoiri T."/>
            <person name="Kaku Y."/>
            <person name="Kodaira H."/>
            <person name="Kondo H."/>
            <person name="Sugawara M."/>
            <person name="Takahashi M."/>
            <person name="Kanda K."/>
            <person name="Yokoi T."/>
            <person name="Furuya T."/>
            <person name="Kikkawa E."/>
            <person name="Omura Y."/>
            <person name="Abe K."/>
            <person name="Kamihara K."/>
            <person name="Katsuta N."/>
            <person name="Sato K."/>
            <person name="Tanikawa M."/>
            <person name="Yamazaki M."/>
            <person name="Ninomiya K."/>
            <person name="Ishibashi T."/>
            <person name="Yamashita H."/>
            <person name="Murakawa K."/>
            <person name="Fujimori K."/>
            <person name="Tanai H."/>
            <person name="Kimata M."/>
            <person name="Watanabe M."/>
            <person name="Hiraoka S."/>
            <person name="Chiba Y."/>
            <person name="Ishida S."/>
            <person name="Ono Y."/>
            <person name="Takiguchi S."/>
            <person name="Watanabe S."/>
            <person name="Yosida M."/>
            <person name="Hotuta T."/>
            <person name="Kusano J."/>
            <person name="Kanehori K."/>
            <person name="Takahashi-Fujii A."/>
            <person name="Hara H."/>
            <person name="Tanase T.-O."/>
            <person name="Nomura Y."/>
            <person name="Togiya S."/>
            <person name="Komai F."/>
            <person name="Hara R."/>
            <person name="Takeuchi K."/>
            <person name="Arita M."/>
            <person name="Imose N."/>
            <person name="Musashino K."/>
            <person name="Yuuki H."/>
            <person name="Oshima A."/>
            <person name="Sasaki N."/>
            <person name="Aotsuka S."/>
            <person name="Yoshikawa Y."/>
            <person name="Matsunawa H."/>
            <person name="Ichihara T."/>
            <person name="Shiohata N."/>
            <person name="Sano S."/>
            <person name="Moriya S."/>
            <person name="Momiyama H."/>
            <person name="Satoh N."/>
            <person name="Takami S."/>
            <person name="Terashima Y."/>
            <person name="Suzuki O."/>
            <person name="Nakagawa S."/>
            <person name="Senoh A."/>
            <person name="Mizoguchi H."/>
            <person name="Goto Y."/>
            <person name="Shimizu F."/>
            <person name="Wakebe H."/>
            <person name="Hishigaki H."/>
            <person name="Watanabe T."/>
            <person name="Sugiyama A."/>
            <person name="Takemoto M."/>
            <person name="Kawakami B."/>
            <person name="Yamazaki M."/>
            <person name="Watanabe K."/>
            <person name="Kumagai A."/>
            <person name="Itakura S."/>
            <person name="Fukuzumi Y."/>
            <person name="Fujimori Y."/>
            <person name="Komiyama M."/>
            <person name="Tashiro H."/>
            <person name="Tanigami A."/>
            <person name="Fujiwara T."/>
            <person name="Ono T."/>
            <person name="Yamada K."/>
            <person name="Fujii Y."/>
            <person name="Ozaki K."/>
            <person name="Hirao M."/>
            <person name="Ohmori Y."/>
            <person name="Kawabata A."/>
            <person name="Hikiji T."/>
            <person name="Kobatake N."/>
            <person name="Inagaki H."/>
            <person name="Ikema Y."/>
            <person name="Okamoto S."/>
            <person name="Okitani R."/>
            <person name="Kawakami T."/>
            <person name="Noguchi S."/>
            <person name="Itoh T."/>
            <person name="Shigeta K."/>
            <person name="Senba T."/>
            <person name="Matsumura K."/>
            <person name="Nakajima Y."/>
            <person name="Mizuno T."/>
            <person name="Morinaga M."/>
            <person name="Sasaki M."/>
            <person name="Togashi T."/>
            <person name="Oyama M."/>
            <person name="Hata H."/>
            <person name="Watanabe M."/>
            <person name="Komatsu T."/>
            <person name="Mizushima-Sugano J."/>
            <person name="Satoh T."/>
            <person name="Shirai Y."/>
            <person name="Takahashi Y."/>
            <person name="Nakagawa K."/>
            <person name="Okumura K."/>
            <person name="Nagase T."/>
            <person name="Nomura N."/>
            <person name="Kikuchi H."/>
            <person name="Masuho Y."/>
            <person name="Yamashita R."/>
            <person name="Nakai K."/>
            <person name="Yada T."/>
            <person name="Nakamura Y."/>
            <person name="Ohara O."/>
            <person name="Isogai T."/>
            <person name="Sugano S."/>
        </authorList>
    </citation>
    <scope>NUCLEOTIDE SEQUENCE [LARGE SCALE MRNA]</scope>
    <source>
        <tissue>Brain</tissue>
        <tissue>Hepatoma</tissue>
    </source>
</reference>
<reference key="3">
    <citation type="submission" date="2005-07" db="EMBL/GenBank/DDBJ databases">
        <authorList>
            <person name="Mural R.J."/>
            <person name="Istrail S."/>
            <person name="Sutton G.G."/>
            <person name="Florea L."/>
            <person name="Halpern A.L."/>
            <person name="Mobarry C.M."/>
            <person name="Lippert R."/>
            <person name="Walenz B."/>
            <person name="Shatkay H."/>
            <person name="Dew I."/>
            <person name="Miller J.R."/>
            <person name="Flanigan M.J."/>
            <person name="Edwards N.J."/>
            <person name="Bolanos R."/>
            <person name="Fasulo D."/>
            <person name="Halldorsson B.V."/>
            <person name="Hannenhalli S."/>
            <person name="Turner R."/>
            <person name="Yooseph S."/>
            <person name="Lu F."/>
            <person name="Nusskern D.R."/>
            <person name="Shue B.C."/>
            <person name="Zheng X.H."/>
            <person name="Zhong F."/>
            <person name="Delcher A.L."/>
            <person name="Huson D.H."/>
            <person name="Kravitz S.A."/>
            <person name="Mouchard L."/>
            <person name="Reinert K."/>
            <person name="Remington K.A."/>
            <person name="Clark A.G."/>
            <person name="Waterman M.S."/>
            <person name="Eichler E.E."/>
            <person name="Adams M.D."/>
            <person name="Hunkapiller M.W."/>
            <person name="Myers E.W."/>
            <person name="Venter J.C."/>
        </authorList>
    </citation>
    <scope>NUCLEOTIDE SEQUENCE [LARGE SCALE GENOMIC DNA]</scope>
</reference>
<reference key="4">
    <citation type="journal article" date="2005" name="J. Biol. Chem.">
        <title>CpG-binding protein (CXXC finger protein 1) is a component of the mammalian Set1 histone H3-Lys4 methyltransferase complex, the analogue of the yeast Set1/COMPASS complex.</title>
        <authorList>
            <person name="Lee J.-H."/>
            <person name="Skalnik D.G."/>
        </authorList>
    </citation>
    <scope>SUBCELLULAR LOCATION</scope>
    <scope>IDENTIFICATION IN THE SET1 COMPLEX</scope>
</reference>
<reference key="5">
    <citation type="journal article" date="2006" name="Nat. Cell Biol.">
        <title>CUL4-DDB1 ubiquitin ligase interacts with multiple WD40-repeat proteins and regulates histone methylation.</title>
        <authorList>
            <person name="Higa L.A."/>
            <person name="Wu M."/>
            <person name="Ye T."/>
            <person name="Kobayashi R."/>
            <person name="Sun H."/>
            <person name="Zhang H."/>
        </authorList>
    </citation>
    <scope>IDENTIFICATION BY MASS SPECTROMETRY</scope>
    <scope>INTERACTION WITH CUL4B</scope>
</reference>
<reference key="6">
    <citation type="journal article" date="2007" name="J. Biol. Chem.">
        <title>Identification and characterization of the human Set1B histone H3-Lys4 methyltransferase complex.</title>
        <authorList>
            <person name="Lee J.-H."/>
            <person name="Tate C.M."/>
            <person name="You J.-S."/>
            <person name="Skalnik D.G."/>
        </authorList>
    </citation>
    <scope>SUBCELLULAR LOCATION</scope>
    <scope>IDENTIFICATION IN SET1 COMPLEX</scope>
</reference>
<reference key="7">
    <citation type="journal article" date="2008" name="Mol. Cell. Biol.">
        <title>Wdr82 is a C-terminal domain-binding protein that recruits the Setd1A Histone H3-Lys4 methyltransferase complex to transcription start sites of transcribed human genes.</title>
        <authorList>
            <person name="Lee J.H."/>
            <person name="Skalnik D.G."/>
        </authorList>
    </citation>
    <scope>FUNCTION</scope>
    <scope>IDENTIFICATION IN SET1 COMPLEX</scope>
    <scope>INTERACTION WITH SETD1A; SETD1B; POLR2A AND POLR2B</scope>
</reference>
<reference key="8">
    <citation type="journal article" date="2008" name="Mol. Cell. Biol.">
        <title>Molecular regulation of H3K4 trimethylation by Wdr82, a component of human Set1/COMPASS.</title>
        <authorList>
            <person name="Wu M."/>
            <person name="Wang P.F."/>
            <person name="Lee J.S."/>
            <person name="Martin-Brown S."/>
            <person name="Florens L."/>
            <person name="Washburn M."/>
            <person name="Shilatifard A."/>
        </authorList>
    </citation>
    <scope>FUNCTION</scope>
    <scope>IDENTIFICATION IN SET1 COMPLEX</scope>
    <scope>INTERACTION WITH RBBP5</scope>
</reference>
<reference key="9">
    <citation type="journal article" date="2010" name="J. Biol. Chem.">
        <title>Identification and characterization of a novel human PP1 phosphatase complex.</title>
        <authorList>
            <person name="Lee J.H."/>
            <person name="You J."/>
            <person name="Dobrota E."/>
            <person name="Skalnik D.G."/>
        </authorList>
    </citation>
    <scope>IDENTIFICATION IN THE PNUTS-PP1 PHOSPHATASE COMPLEX</scope>
    <scope>FUNCTION</scope>
    <scope>SUBCELLULAR LOCATION</scope>
    <scope>INTERACTION WITH PPP1CA AND PPP1R10/PNUTS</scope>
</reference>
<reference key="10">
    <citation type="journal article" date="2011" name="BMC Syst. Biol.">
        <title>Initial characterization of the human central proteome.</title>
        <authorList>
            <person name="Burkard T.R."/>
            <person name="Planyavsky M."/>
            <person name="Kaupe I."/>
            <person name="Breitwieser F.P."/>
            <person name="Buerckstuemmer T."/>
            <person name="Bennett K.L."/>
            <person name="Superti-Furga G."/>
            <person name="Colinge J."/>
        </authorList>
    </citation>
    <scope>IDENTIFICATION BY MASS SPECTROMETRY [LARGE SCALE ANALYSIS]</scope>
</reference>
<reference key="11">
    <citation type="journal article" date="2012" name="Proc. Natl. Acad. Sci. U.S.A.">
        <title>N-terminal acetylome analyses and functional insights of the N-terminal acetyltransferase NatB.</title>
        <authorList>
            <person name="Van Damme P."/>
            <person name="Lasa M."/>
            <person name="Polevoda B."/>
            <person name="Gazquez C."/>
            <person name="Elosegui-Artola A."/>
            <person name="Kim D.S."/>
            <person name="De Juan-Pardo E."/>
            <person name="Demeyer K."/>
            <person name="Hole K."/>
            <person name="Larrea E."/>
            <person name="Timmerman E."/>
            <person name="Prieto J."/>
            <person name="Arnesen T."/>
            <person name="Sherman F."/>
            <person name="Gevaert K."/>
            <person name="Aldabe R."/>
        </authorList>
    </citation>
    <scope>IDENTIFICATION BY MASS SPECTROMETRY [LARGE SCALE ANALYSIS]</scope>
</reference>
<reference key="12">
    <citation type="journal article" date="2021" name="Elife">
        <title>ZC3H4 restricts non-coding transcription in human cells.</title>
        <authorList>
            <person name="Estell C."/>
            <person name="Davidson L."/>
            <person name="Steketee P.C."/>
            <person name="Monier A."/>
            <person name="West S."/>
        </authorList>
    </citation>
    <scope>FUNCTION</scope>
    <scope>INTERACTION WITH ZC3H4</scope>
</reference>
<reference key="13">
    <citation type="journal article" date="2021" name="Nat. Struct. Mol. Biol.">
        <title>A first exon termination checkpoint preferentially suppresses extragenic transcription.</title>
        <authorList>
            <person name="Austenaa L.M.I."/>
            <person name="Piccolo V."/>
            <person name="Russo M."/>
            <person name="Prosperini E."/>
            <person name="Polletti S."/>
            <person name="Polizzese D."/>
            <person name="Ghisletti S."/>
            <person name="Barozzi I."/>
            <person name="Diaferia G.R."/>
            <person name="Natoli G."/>
        </authorList>
    </citation>
    <scope>FUNCTION</scope>
</reference>
<reference key="14">
    <citation type="journal article" date="2023" name="Biochem. Biophys. Res. Commun.">
        <title>Molecular insight into the SETD1A/B N-terminal region and its interaction with WDR82.</title>
        <authorList>
            <person name="Bao S."/>
            <person name="Xu C."/>
        </authorList>
    </citation>
    <scope>INTERACTION WITH SETD1A AND SETD1B</scope>
</reference>
<reference key="15">
    <citation type="journal article" date="2024" name="Mol. Cell">
        <title>The phosphatase PP1 sustains global transcription by promoting RNA polymerase II pause release.</title>
        <authorList>
            <person name="Wang Z."/>
            <person name="Song A."/>
            <person name="Tao B."/>
            <person name="Miao M."/>
            <person name="Luo Y.Q."/>
            <person name="Wang J."/>
            <person name="Yin Z."/>
            <person name="Xiao R."/>
            <person name="Zhou X."/>
            <person name="Shang X.Y."/>
            <person name="Hu S."/>
            <person name="Liang K."/>
            <person name="Danko C.G."/>
            <person name="Chen F.X."/>
        </authorList>
    </citation>
    <scope>FUNCTION</scope>
    <scope>IDENTIFICATION IN THE PNUTS-PP1 PHOSPHATASE COMPLEX</scope>
</reference>
<reference key="16">
    <citation type="journal article" date="2024" name="Mol. Cell">
        <title>The PNUTS phosphatase complex controls transcription pause release.</title>
        <authorList>
            <person name="Kelley J.R."/>
            <person name="Dimitrova E."/>
            <person name="Maciuszek M."/>
            <person name="Nguyen H.T."/>
            <person name="Szczurek A.T."/>
            <person name="Hughes A.L."/>
            <person name="Blackledge N.P."/>
            <person name="Kettenbach A.N."/>
            <person name="Klose R.J."/>
        </authorList>
    </citation>
    <scope>FUNCTION</scope>
    <scope>IDENTIFICATION IN THE PNUTS-PP1 PHOSPHATASE COMPLEX</scope>
</reference>
<organism>
    <name type="scientific">Homo sapiens</name>
    <name type="common">Human</name>
    <dbReference type="NCBI Taxonomy" id="9606"/>
    <lineage>
        <taxon>Eukaryota</taxon>
        <taxon>Metazoa</taxon>
        <taxon>Chordata</taxon>
        <taxon>Craniata</taxon>
        <taxon>Vertebrata</taxon>
        <taxon>Euteleostomi</taxon>
        <taxon>Mammalia</taxon>
        <taxon>Eutheria</taxon>
        <taxon>Euarchontoglires</taxon>
        <taxon>Primates</taxon>
        <taxon>Haplorrhini</taxon>
        <taxon>Catarrhini</taxon>
        <taxon>Hominidae</taxon>
        <taxon>Homo</taxon>
    </lineage>
</organism>
<comment type="function">
    <text evidence="5 6 7 8 9 11 12">Regulatory component of the SET1/COMPASS complex implicated in the tethering of this complex to transcriptional start sites of active genes (PubMed:17998332, PubMed:18838538, PubMed:20516061). Facilitates histone H3 'Lys-4' methylation (H3K4me) via recruitment of the SETD1A or SETD1B to the 'Ser-5' phosphorylated C-terminal domain (CTD) of RNA polymerase II large subunit (POLR2A) (PubMed:17998332, PubMed:18838538). Component of the PNUTS-PP1 protein phosphatase complex, a protein phosphatase 1 (PP1) complex that promotes RNA polymerase II transcription pause-release, allowing transcription elongation (PubMed:39603240, PubMed:39603239). PNUTS-PP1 also plays a role in the control of chromatin structure and cell cycle progression during the transition from mitosis into interphase (PubMed:20516061). Together with ZC3H4, but independently of the SET1 complex, part of a transcription termination checkpoint that promotes transcription termination of long non-coding RNAs (lncRNAs) (PubMed:33767452, PubMed:33913806). The transcription termination checkpoint is activated by the inefficiently spliced first exon of lncRNAs and promotes transcription termination of lncRNAs and their subsequent degradation by the exosome (PubMed:33767452).</text>
</comment>
<comment type="subunit">
    <text evidence="2 3 4 5 6 7 9 10 12">Component of the SET1/COMPASS complex, at least composed of the catalytic subunit (SETD1A or SETD1B), WDR5, WDR82, RBBP5, ASH2L/ASH2, CXXC1/CFP1, HCFC1 and DPY30 (PubMed:16253997, PubMed:17355966, PubMed:17998332, PubMed:18838538). Component of the PNUTS-PP1 phosphatase complex, composed of PPP1R10/PNUTS, TOX4, WDR82, and PPP1CA or PPP1CB or PPP1CC (PubMed:20516061, PubMed:39603240, PubMed:39603239). Associated with multiple protein complexes including an RNA polymerase II complex, MLL3/MLL4 complex and a chaperonin-containing TCP1 complex (PubMed:20516061). Interacts with SETD1B (via N-terminal region); the interaction is direct (PubMed:17998332, PubMed:37030068). Interacts with SETD1A (via N-terminal region); the interaction is direct (PubMed:17998332, PubMed:37030068). Interacts with CUL4B (PubMed:17041588). Interacts with RBBP5 (PubMed:18838538). Interacts with POLR2B (PubMed:17998332). Interacts with hyperphosphorylated C-terminal domain (CTD) of RNA polymerase II large subunit (POLR2A) (PubMed:17998332). Binds specifically to CTD heptad repeats phosphorylated on 'Ser-5' of each heptad (PubMed:17998332). SETD1A enhances its interaction with POLR2A (PubMed:17998332). Interacts with PPP1R10/PNUTS (PubMed:20516061). Interacts with PPP1CA in the presence of PPP1R10/PNUTS (PubMed:20516061). Interacts with ZC3H4; interaction is independent of the SET1 complex and promotes transcription termination of long non-coding RNAs (lncRNAs) (PubMed:33913806).</text>
</comment>
<comment type="subcellular location">
    <subcellularLocation>
        <location evidence="2 4 7">Nucleus</location>
    </subcellularLocation>
    <subcellularLocation>
        <location evidence="1">Chromosome</location>
    </subcellularLocation>
    <subcellularLocation>
        <location evidence="1">Cytoplasm</location>
    </subcellularLocation>
    <text evidence="1 7">Associates with chromatin (PubMed:20516061). Recruited at sites of high RNA polymerase II occupancy (By similarity).</text>
</comment>
<comment type="similarity">
    <text evidence="15">Belongs to the WD repeat SWD2 family.</text>
</comment>
<comment type="caution">
    <text evidence="15">The gene encoding this protein shares one overlapping exon with TMEM113.</text>
</comment>
<comment type="sequence caution" evidence="15">
    <conflict type="erroneous initiation">
        <sequence resource="EMBL-CDS" id="BAB85039"/>
    </conflict>
    <text>Truncated N-terminus.</text>
</comment>
<sequence>MKLTDSVLRSFRVAKVFRENSDKINCFDFSPNGETVISSSDDDSIVLYDCQEGKPKRTLYSKKYGVDLIRYTHAANTVVYSSNKIDDTIRYLSLHDNKYIRYFPGHSKRVVALSMSPVDDTFISGSLDKTIRLWDLRSPNCQGLMHLQGKPVCSFDPEGLIFAAGVNSEMVKLYDLRSFDKGPFATFKMQYDRTCEWTGLKFSNDGKLILISTNGSFIRLIDAFKGVVMHTFGGYANSKAVTLEASFTPDSQFIMIGSEDGKIHVWNGESGIKVAVLDGKHTGPITCLQFNPKFMTFASACSNMAFWLPTIDD</sequence>
<accession>Q6UXN9</accession>
<accession>A8K5R5</accession>
<accession>Q8TEB2</accession>
<keyword id="KW-0158">Chromosome</keyword>
<keyword id="KW-0963">Cytoplasm</keyword>
<keyword id="KW-0539">Nucleus</keyword>
<keyword id="KW-1267">Proteomics identification</keyword>
<keyword id="KW-1185">Reference proteome</keyword>
<keyword id="KW-0677">Repeat</keyword>
<keyword id="KW-0804">Transcription</keyword>
<keyword id="KW-0805">Transcription regulation</keyword>
<keyword id="KW-0806">Transcription termination</keyword>
<keyword id="KW-0853">WD repeat</keyword>
<dbReference type="EMBL" id="AY358264">
    <property type="protein sequence ID" value="AAQ88631.1"/>
    <property type="molecule type" value="mRNA"/>
</dbReference>
<dbReference type="EMBL" id="AK074290">
    <property type="protein sequence ID" value="BAB85039.1"/>
    <property type="status" value="ALT_INIT"/>
    <property type="molecule type" value="mRNA"/>
</dbReference>
<dbReference type="EMBL" id="AK291380">
    <property type="protein sequence ID" value="BAF84069.1"/>
    <property type="molecule type" value="mRNA"/>
</dbReference>
<dbReference type="EMBL" id="CH471055">
    <property type="protein sequence ID" value="EAW65202.1"/>
    <property type="molecule type" value="Genomic_DNA"/>
</dbReference>
<dbReference type="CCDS" id="CCDS2851.2"/>
<dbReference type="RefSeq" id="NP_079498.2">
    <property type="nucleotide sequence ID" value="NM_025222.4"/>
</dbReference>
<dbReference type="SMR" id="Q6UXN9"/>
<dbReference type="BioGRID" id="123245">
    <property type="interactions" value="217"/>
</dbReference>
<dbReference type="ComplexPortal" id="CPX-7110">
    <property type="entry name" value="Histone-lysine N-methyltransferase complex, SET1A variant"/>
</dbReference>
<dbReference type="ComplexPortal" id="CPX-7111">
    <property type="entry name" value="Histone-lysine N-methyltransferase complex, SET1B variant"/>
</dbReference>
<dbReference type="CORUM" id="Q6UXN9"/>
<dbReference type="FunCoup" id="Q6UXN9">
    <property type="interactions" value="3874"/>
</dbReference>
<dbReference type="IntAct" id="Q6UXN9">
    <property type="interactions" value="63"/>
</dbReference>
<dbReference type="MINT" id="Q6UXN9"/>
<dbReference type="STRING" id="9606.ENSP00000296490"/>
<dbReference type="GlyGen" id="Q6UXN9">
    <property type="glycosylation" value="1 site, 1 O-linked glycan (1 site)"/>
</dbReference>
<dbReference type="iPTMnet" id="Q6UXN9"/>
<dbReference type="MetOSite" id="Q6UXN9"/>
<dbReference type="PhosphoSitePlus" id="Q6UXN9"/>
<dbReference type="SwissPalm" id="Q6UXN9"/>
<dbReference type="BioMuta" id="WDR82"/>
<dbReference type="DMDM" id="74758580"/>
<dbReference type="jPOST" id="Q6UXN9"/>
<dbReference type="MassIVE" id="Q6UXN9"/>
<dbReference type="PaxDb" id="9606-ENSP00000296490"/>
<dbReference type="PeptideAtlas" id="Q6UXN9"/>
<dbReference type="ProteomicsDB" id="67641"/>
<dbReference type="Pumba" id="Q6UXN9"/>
<dbReference type="Antibodypedia" id="56045">
    <property type="antibodies" value="83 antibodies from 20 providers"/>
</dbReference>
<dbReference type="DNASU" id="80335"/>
<dbReference type="Ensembl" id="ENST00000296490.8">
    <property type="protein sequence ID" value="ENSP00000296490.3"/>
    <property type="gene ID" value="ENSG00000164091.12"/>
</dbReference>
<dbReference type="GeneID" id="80335"/>
<dbReference type="KEGG" id="hsa:80335"/>
<dbReference type="MANE-Select" id="ENST00000296490.8">
    <property type="protein sequence ID" value="ENSP00000296490.3"/>
    <property type="RefSeq nucleotide sequence ID" value="NM_025222.4"/>
    <property type="RefSeq protein sequence ID" value="NP_079498.2"/>
</dbReference>
<dbReference type="UCSC" id="uc003ddl.3">
    <property type="organism name" value="human"/>
</dbReference>
<dbReference type="AGR" id="HGNC:28826"/>
<dbReference type="CTD" id="80335"/>
<dbReference type="DisGeNET" id="80335"/>
<dbReference type="GeneCards" id="WDR82"/>
<dbReference type="HGNC" id="HGNC:28826">
    <property type="gene designation" value="WDR82"/>
</dbReference>
<dbReference type="HPA" id="ENSG00000164091">
    <property type="expression patterns" value="Low tissue specificity"/>
</dbReference>
<dbReference type="MIM" id="611059">
    <property type="type" value="gene"/>
</dbReference>
<dbReference type="neXtProt" id="NX_Q6UXN9"/>
<dbReference type="OpenTargets" id="ENSG00000164091"/>
<dbReference type="PharmGKB" id="PA142670585"/>
<dbReference type="VEuPathDB" id="HostDB:ENSG00000164091"/>
<dbReference type="eggNOG" id="KOG1446">
    <property type="taxonomic scope" value="Eukaryota"/>
</dbReference>
<dbReference type="GeneTree" id="ENSGT00530000063965"/>
<dbReference type="HOGENOM" id="CLU_044117_3_0_1"/>
<dbReference type="InParanoid" id="Q6UXN9"/>
<dbReference type="OMA" id="HNEGYIR"/>
<dbReference type="OrthoDB" id="27537at2759"/>
<dbReference type="PAN-GO" id="Q6UXN9">
    <property type="GO annotations" value="3 GO annotations based on evolutionary models"/>
</dbReference>
<dbReference type="PhylomeDB" id="Q6UXN9"/>
<dbReference type="TreeFam" id="TF313497"/>
<dbReference type="PathwayCommons" id="Q6UXN9"/>
<dbReference type="Reactome" id="R-HSA-9772755">
    <property type="pathway name" value="Formation of WDR5-containing histone-modifying complexes"/>
</dbReference>
<dbReference type="SignaLink" id="Q6UXN9"/>
<dbReference type="BioGRID-ORCS" id="80335">
    <property type="hits" value="825 hits in 1189 CRISPR screens"/>
</dbReference>
<dbReference type="ChiTaRS" id="WDR82">
    <property type="organism name" value="human"/>
</dbReference>
<dbReference type="GenomeRNAi" id="80335"/>
<dbReference type="Pharos" id="Q6UXN9">
    <property type="development level" value="Tbio"/>
</dbReference>
<dbReference type="PRO" id="PR:Q6UXN9"/>
<dbReference type="Proteomes" id="UP000005640">
    <property type="component" value="Chromosome 3"/>
</dbReference>
<dbReference type="RNAct" id="Q6UXN9">
    <property type="molecule type" value="protein"/>
</dbReference>
<dbReference type="Bgee" id="ENSG00000164091">
    <property type="expression patterns" value="Expressed in cortical plate and 217 other cell types or tissues"/>
</dbReference>
<dbReference type="ExpressionAtlas" id="Q6UXN9">
    <property type="expression patterns" value="baseline and differential"/>
</dbReference>
<dbReference type="GO" id="GO:0000785">
    <property type="term" value="C:chromatin"/>
    <property type="evidence" value="ECO:0000314"/>
    <property type="project" value="UniProtKB"/>
</dbReference>
<dbReference type="GO" id="GO:0035097">
    <property type="term" value="C:histone methyltransferase complex"/>
    <property type="evidence" value="ECO:0000314"/>
    <property type="project" value="UniProtKB"/>
</dbReference>
<dbReference type="GO" id="GO:0005730">
    <property type="term" value="C:nucleolus"/>
    <property type="evidence" value="ECO:0000314"/>
    <property type="project" value="HPA"/>
</dbReference>
<dbReference type="GO" id="GO:0005654">
    <property type="term" value="C:nucleoplasm"/>
    <property type="evidence" value="ECO:0000304"/>
    <property type="project" value="Reactome"/>
</dbReference>
<dbReference type="GO" id="GO:0072357">
    <property type="term" value="C:PTW/PP1 phosphatase complex"/>
    <property type="evidence" value="ECO:0000314"/>
    <property type="project" value="UniProtKB"/>
</dbReference>
<dbReference type="GO" id="GO:0048188">
    <property type="term" value="C:Set1C/COMPASS complex"/>
    <property type="evidence" value="ECO:0000314"/>
    <property type="project" value="UniProtKB"/>
</dbReference>
<dbReference type="GO" id="GO:0003682">
    <property type="term" value="F:chromatin binding"/>
    <property type="evidence" value="ECO:0000318"/>
    <property type="project" value="GO_Central"/>
</dbReference>
<dbReference type="GO" id="GO:0106222">
    <property type="term" value="F:lncRNA binding"/>
    <property type="evidence" value="ECO:0007669"/>
    <property type="project" value="Ensembl"/>
</dbReference>
<dbReference type="GO" id="GO:0006353">
    <property type="term" value="P:DNA-templated transcription termination"/>
    <property type="evidence" value="ECO:0007669"/>
    <property type="project" value="UniProtKB-KW"/>
</dbReference>
<dbReference type="GO" id="GO:0110064">
    <property type="term" value="P:lncRNA catabolic process"/>
    <property type="evidence" value="ECO:0000314"/>
    <property type="project" value="UniProtKB"/>
</dbReference>
<dbReference type="GO" id="GO:0032785">
    <property type="term" value="P:negative regulation of DNA-templated transcription, elongation"/>
    <property type="evidence" value="ECO:0000314"/>
    <property type="project" value="UniProtKB"/>
</dbReference>
<dbReference type="GO" id="GO:0140744">
    <property type="term" value="P:negative regulation of lncRNA transcription"/>
    <property type="evidence" value="ECO:0000314"/>
    <property type="project" value="UniProtKB"/>
</dbReference>
<dbReference type="GO" id="GO:0071027">
    <property type="term" value="P:nuclear RNA surveillance"/>
    <property type="evidence" value="ECO:0000314"/>
    <property type="project" value="UniProtKB"/>
</dbReference>
<dbReference type="GO" id="GO:0032968">
    <property type="term" value="P:positive regulation of transcription elongation by RNA polymerase II"/>
    <property type="evidence" value="ECO:0000314"/>
    <property type="project" value="UniProtKB"/>
</dbReference>
<dbReference type="GO" id="GO:0001111">
    <property type="term" value="P:RNA polymerase II promoter clearance"/>
    <property type="evidence" value="ECO:0000314"/>
    <property type="project" value="UniProtKB"/>
</dbReference>
<dbReference type="CDD" id="cd00200">
    <property type="entry name" value="WD40"/>
    <property type="match status" value="1"/>
</dbReference>
<dbReference type="FunFam" id="2.130.10.10:FF:000065">
    <property type="entry name" value="WD repeat-containing protein 82"/>
    <property type="match status" value="1"/>
</dbReference>
<dbReference type="Gene3D" id="2.130.10.10">
    <property type="entry name" value="YVTN repeat-like/Quinoprotein amine dehydrogenase"/>
    <property type="match status" value="2"/>
</dbReference>
<dbReference type="InterPro" id="IPR020472">
    <property type="entry name" value="G-protein_beta_WD-40_rep"/>
</dbReference>
<dbReference type="InterPro" id="IPR037867">
    <property type="entry name" value="Swd2/WDR82"/>
</dbReference>
<dbReference type="InterPro" id="IPR015943">
    <property type="entry name" value="WD40/YVTN_repeat-like_dom_sf"/>
</dbReference>
<dbReference type="InterPro" id="IPR036322">
    <property type="entry name" value="WD40_repeat_dom_sf"/>
</dbReference>
<dbReference type="InterPro" id="IPR001680">
    <property type="entry name" value="WD40_rpt"/>
</dbReference>
<dbReference type="PANTHER" id="PTHR19861:SF0">
    <property type="entry name" value="WD REPEAT-CONTAINING PROTEIN 82"/>
    <property type="match status" value="1"/>
</dbReference>
<dbReference type="PANTHER" id="PTHR19861">
    <property type="entry name" value="WD40 REPEAT PROTEIN SWD2"/>
    <property type="match status" value="1"/>
</dbReference>
<dbReference type="Pfam" id="PF00400">
    <property type="entry name" value="WD40"/>
    <property type="match status" value="3"/>
</dbReference>
<dbReference type="PRINTS" id="PR00320">
    <property type="entry name" value="GPROTEINBRPT"/>
</dbReference>
<dbReference type="SMART" id="SM00320">
    <property type="entry name" value="WD40"/>
    <property type="match status" value="6"/>
</dbReference>
<dbReference type="SUPFAM" id="SSF50978">
    <property type="entry name" value="WD40 repeat-like"/>
    <property type="match status" value="1"/>
</dbReference>
<dbReference type="PROSITE" id="PS00678">
    <property type="entry name" value="WD_REPEATS_1"/>
    <property type="match status" value="1"/>
</dbReference>
<dbReference type="PROSITE" id="PS50082">
    <property type="entry name" value="WD_REPEATS_2"/>
    <property type="match status" value="3"/>
</dbReference>
<dbReference type="PROSITE" id="PS50294">
    <property type="entry name" value="WD_REPEATS_REGION"/>
    <property type="match status" value="1"/>
</dbReference>
<protein>
    <recommendedName>
        <fullName evidence="15">WD repeat-containing protein 82</fullName>
    </recommendedName>
</protein>
<evidence type="ECO:0000250" key="1">
    <source>
        <dbReference type="UniProtKB" id="Q8BFQ4"/>
    </source>
</evidence>
<evidence type="ECO:0000269" key="2">
    <source>
    </source>
</evidence>
<evidence type="ECO:0000269" key="3">
    <source>
    </source>
</evidence>
<evidence type="ECO:0000269" key="4">
    <source>
    </source>
</evidence>
<evidence type="ECO:0000269" key="5">
    <source>
    </source>
</evidence>
<evidence type="ECO:0000269" key="6">
    <source>
    </source>
</evidence>
<evidence type="ECO:0000269" key="7">
    <source>
    </source>
</evidence>
<evidence type="ECO:0000269" key="8">
    <source>
    </source>
</evidence>
<evidence type="ECO:0000269" key="9">
    <source>
    </source>
</evidence>
<evidence type="ECO:0000269" key="10">
    <source>
    </source>
</evidence>
<evidence type="ECO:0000269" key="11">
    <source>
    </source>
</evidence>
<evidence type="ECO:0000269" key="12">
    <source>
    </source>
</evidence>
<evidence type="ECO:0000303" key="13">
    <source>
    </source>
</evidence>
<evidence type="ECO:0000303" key="14">
    <source>
    </source>
</evidence>
<evidence type="ECO:0000305" key="15"/>
<evidence type="ECO:0000312" key="16">
    <source>
        <dbReference type="HGNC" id="HGNC:28826"/>
    </source>
</evidence>
<name>WDR82_HUMAN</name>
<proteinExistence type="evidence at protein level"/>
<gene>
    <name evidence="14 16" type="primary">WDR82</name>
    <name type="synonym">SWD2</name>
    <name type="synonym">TMEM113</name>
    <name type="synonym">WDR82A</name>
    <name evidence="13" type="ORF">UNQ9342/PRO34047</name>
</gene>